<name>VP3_CAVCA</name>
<keyword id="KW-0053">Apoptosis</keyword>
<keyword id="KW-0244">Early protein</keyword>
<keyword id="KW-1048">Host nucleus</keyword>
<keyword id="KW-0945">Host-virus interaction</keyword>
<keyword id="KW-1098">Inhibition of host mitotic exit by virus</keyword>
<keyword id="KW-1121">Modulation of host cell cycle by virus</keyword>
<accession>Q9IZU6</accession>
<feature type="chain" id="PRO_0000314475" description="Apoptin">
    <location>
        <begin position="1"/>
        <end position="121"/>
    </location>
</feature>
<feature type="region of interest" description="Disordered" evidence="2">
    <location>
        <begin position="1"/>
        <end position="28"/>
    </location>
</feature>
<feature type="region of interest" description="Disordered" evidence="2">
    <location>
        <begin position="57"/>
        <end position="95"/>
    </location>
</feature>
<feature type="compositionally biased region" description="Polar residues" evidence="2">
    <location>
        <begin position="58"/>
        <end position="70"/>
    </location>
</feature>
<protein>
    <recommendedName>
        <fullName>Apoptin</fullName>
    </recommendedName>
</protein>
<proteinExistence type="evidence at transcript level"/>
<dbReference type="EMBL" id="AF227982">
    <property type="protein sequence ID" value="AAF34788.1"/>
    <property type="molecule type" value="Genomic_DNA"/>
</dbReference>
<dbReference type="Proteomes" id="UP000007539">
    <property type="component" value="Genome"/>
</dbReference>
<dbReference type="GO" id="GO:0042025">
    <property type="term" value="C:host cell nucleus"/>
    <property type="evidence" value="ECO:0007669"/>
    <property type="project" value="UniProtKB-SubCell"/>
</dbReference>
<dbReference type="GO" id="GO:0052151">
    <property type="term" value="P:symbiont-mediated activation of host apoptosis"/>
    <property type="evidence" value="ECO:0007669"/>
    <property type="project" value="InterPro"/>
</dbReference>
<dbReference type="GO" id="GO:0039593">
    <property type="term" value="P:symbiont-mediated perturbation of host exit from mitosis"/>
    <property type="evidence" value="ECO:0007669"/>
    <property type="project" value="UniProtKB-KW"/>
</dbReference>
<dbReference type="InterPro" id="IPR006858">
    <property type="entry name" value="CAV_VP3"/>
</dbReference>
<dbReference type="Pfam" id="PF04771">
    <property type="entry name" value="CAV_VP3"/>
    <property type="match status" value="1"/>
</dbReference>
<organismHost>
    <name type="scientific">Gallus gallus</name>
    <name type="common">Chicken</name>
    <dbReference type="NCBI Taxonomy" id="9031"/>
</organismHost>
<gene>
    <name type="primary">VP3</name>
</gene>
<organism>
    <name type="scientific">Chicken anemia virus (isolate Australia/CAU269-7/2000)</name>
    <name type="common">CAV</name>
    <dbReference type="NCBI Taxonomy" id="486492"/>
    <lineage>
        <taxon>Viruses</taxon>
        <taxon>Viruses incertae sedis</taxon>
        <taxon>Anelloviridae</taxon>
        <taxon>Gyrovirus</taxon>
        <taxon>Gyrovirus chickenanemia</taxon>
    </lineage>
</organism>
<comment type="function">
    <text evidence="1">May act as transcriptional regulator. Induces apoptosis in infected cells. Element of infectious replication cycle (By similarity).</text>
</comment>
<comment type="subcellular location">
    <subcellularLocation>
        <location>Host nucleus</location>
    </subcellularLocation>
    <text evidence="1">Host nucleus of infected cells.</text>
</comment>
<comment type="induction">
    <text>VP1 and VP2 are detected 12 hours post infection, while VP3 only after 24 hours.</text>
</comment>
<comment type="similarity">
    <text evidence="3">Belongs to the gyrovirus apoptin family.</text>
</comment>
<reference key="1">
    <citation type="journal article" date="2000" name="Aust. Vet. J.">
        <title>Full-length infectious clone of a pathogenic Australian isolate of chicken anaemia virus.</title>
        <authorList>
            <person name="Brown H.K."/>
            <person name="Browning G.F."/>
            <person name="Scott P.C."/>
            <person name="Crabb B.S."/>
            <person name="Brown K."/>
        </authorList>
    </citation>
    <scope>NUCLEOTIDE SEQUENCE [GENOMIC DNA]</scope>
</reference>
<sequence length="121" mass="13310">MNAHQEDTPPGPSTVFRPPTSSRPLETPHCREIRIGIAGITVTLSLCGCANARVPTLRSATADNSENTGFKNVPDLRTDQPKPPSKKRSCDPSEYRVSELKESLITTTPSRPRTARRCIRL</sequence>
<evidence type="ECO:0000250" key="1"/>
<evidence type="ECO:0000256" key="2">
    <source>
        <dbReference type="SAM" id="MobiDB-lite"/>
    </source>
</evidence>
<evidence type="ECO:0000305" key="3"/>